<evidence type="ECO:0000255" key="1">
    <source>
        <dbReference type="HAMAP-Rule" id="MF_01333"/>
    </source>
</evidence>
<evidence type="ECO:0000305" key="2"/>
<organism>
    <name type="scientific">Methanococcus maripaludis (strain C6 / ATCC BAA-1332)</name>
    <dbReference type="NCBI Taxonomy" id="444158"/>
    <lineage>
        <taxon>Archaea</taxon>
        <taxon>Methanobacteriati</taxon>
        <taxon>Methanobacteriota</taxon>
        <taxon>Methanomada group</taxon>
        <taxon>Methanococci</taxon>
        <taxon>Methanococcales</taxon>
        <taxon>Methanococcaceae</taxon>
        <taxon>Methanococcus</taxon>
    </lineage>
</organism>
<dbReference type="EMBL" id="CP000867">
    <property type="protein sequence ID" value="ABX02074.1"/>
    <property type="molecule type" value="Genomic_DNA"/>
</dbReference>
<dbReference type="SMR" id="A9A9Q1"/>
<dbReference type="STRING" id="444158.MmarC6_1261"/>
<dbReference type="KEGG" id="mmx:MmarC6_1261"/>
<dbReference type="eggNOG" id="arCOG04092">
    <property type="taxonomic scope" value="Archaea"/>
</dbReference>
<dbReference type="HOGENOM" id="CLU_061015_3_0_2"/>
<dbReference type="OrthoDB" id="372044at2157"/>
<dbReference type="PhylomeDB" id="A9A9Q1"/>
<dbReference type="GO" id="GO:1990904">
    <property type="term" value="C:ribonucleoprotein complex"/>
    <property type="evidence" value="ECO:0007669"/>
    <property type="project" value="UniProtKB-KW"/>
</dbReference>
<dbReference type="GO" id="GO:0005840">
    <property type="term" value="C:ribosome"/>
    <property type="evidence" value="ECO:0007669"/>
    <property type="project" value="UniProtKB-KW"/>
</dbReference>
<dbReference type="GO" id="GO:0019843">
    <property type="term" value="F:rRNA binding"/>
    <property type="evidence" value="ECO:0007669"/>
    <property type="project" value="UniProtKB-UniRule"/>
</dbReference>
<dbReference type="GO" id="GO:0003735">
    <property type="term" value="F:structural constituent of ribosome"/>
    <property type="evidence" value="ECO:0007669"/>
    <property type="project" value="InterPro"/>
</dbReference>
<dbReference type="GO" id="GO:0000049">
    <property type="term" value="F:tRNA binding"/>
    <property type="evidence" value="ECO:0007669"/>
    <property type="project" value="UniProtKB-UniRule"/>
</dbReference>
<dbReference type="GO" id="GO:0006412">
    <property type="term" value="P:translation"/>
    <property type="evidence" value="ECO:0007669"/>
    <property type="project" value="UniProtKB-UniRule"/>
</dbReference>
<dbReference type="FunFam" id="3.30.1440.10:FF:000002">
    <property type="entry name" value="60S ribosomal protein L11"/>
    <property type="match status" value="1"/>
</dbReference>
<dbReference type="Gene3D" id="3.30.1440.10">
    <property type="match status" value="1"/>
</dbReference>
<dbReference type="HAMAP" id="MF_01333_A">
    <property type="entry name" value="Ribosomal_uL5_A"/>
    <property type="match status" value="1"/>
</dbReference>
<dbReference type="InterPro" id="IPR002132">
    <property type="entry name" value="Ribosomal_uL5"/>
</dbReference>
<dbReference type="InterPro" id="IPR022804">
    <property type="entry name" value="Ribosomal_uL5_arc"/>
</dbReference>
<dbReference type="InterPro" id="IPR031309">
    <property type="entry name" value="Ribosomal_uL5_C"/>
</dbReference>
<dbReference type="InterPro" id="IPR020929">
    <property type="entry name" value="Ribosomal_uL5_CS"/>
</dbReference>
<dbReference type="InterPro" id="IPR022803">
    <property type="entry name" value="Ribosomal_uL5_dom_sf"/>
</dbReference>
<dbReference type="InterPro" id="IPR031310">
    <property type="entry name" value="Ribosomal_uL5_N"/>
</dbReference>
<dbReference type="NCBIfam" id="NF003258">
    <property type="entry name" value="PRK04219.1"/>
    <property type="match status" value="1"/>
</dbReference>
<dbReference type="PANTHER" id="PTHR11994">
    <property type="entry name" value="60S RIBOSOMAL PROTEIN L11-RELATED"/>
    <property type="match status" value="1"/>
</dbReference>
<dbReference type="Pfam" id="PF00281">
    <property type="entry name" value="Ribosomal_L5"/>
    <property type="match status" value="1"/>
</dbReference>
<dbReference type="Pfam" id="PF00673">
    <property type="entry name" value="Ribosomal_L5_C"/>
    <property type="match status" value="1"/>
</dbReference>
<dbReference type="PIRSF" id="PIRSF002161">
    <property type="entry name" value="Ribosomal_L5"/>
    <property type="match status" value="1"/>
</dbReference>
<dbReference type="SUPFAM" id="SSF55282">
    <property type="entry name" value="RL5-like"/>
    <property type="match status" value="1"/>
</dbReference>
<dbReference type="PROSITE" id="PS00358">
    <property type="entry name" value="RIBOSOMAL_L5"/>
    <property type="match status" value="1"/>
</dbReference>
<proteinExistence type="inferred from homology"/>
<accession>A9A9Q1</accession>
<protein>
    <recommendedName>
        <fullName evidence="1">Large ribosomal subunit protein uL5</fullName>
    </recommendedName>
    <alternativeName>
        <fullName evidence="2">50S ribosomal protein L5</fullName>
    </alternativeName>
</protein>
<sequence>MSFQEVWEKEPMKKPRIQKVTVNFGVGEAGDRLTIGAKVIEELTGQSPVRTLAKQTNPAFGIRKKLPIGLKVTLRGKNAEEFLGNAFTAFKTSGKVLYASSFDQVGNFSFGVPEHIDFPGQKYDPSIGIYGMDVCVTFEKSGYRVKSRKVKRSHIPKKHLVTKDEAIEYIQTKFDTEVVRE</sequence>
<name>RL5_METM6</name>
<gene>
    <name evidence="1" type="primary">rpl5</name>
    <name type="ordered locus">MmarC6_1261</name>
</gene>
<reference key="1">
    <citation type="submission" date="2007-10" db="EMBL/GenBank/DDBJ databases">
        <title>Complete sequence of Methanococcus maripaludis C6.</title>
        <authorList>
            <consortium name="US DOE Joint Genome Institute"/>
            <person name="Copeland A."/>
            <person name="Lucas S."/>
            <person name="Lapidus A."/>
            <person name="Barry K."/>
            <person name="Glavina del Rio T."/>
            <person name="Dalin E."/>
            <person name="Tice H."/>
            <person name="Pitluck S."/>
            <person name="Clum A."/>
            <person name="Schmutz J."/>
            <person name="Larimer F."/>
            <person name="Land M."/>
            <person name="Hauser L."/>
            <person name="Kyrpides N."/>
            <person name="Mikhailova N."/>
            <person name="Sieprawska-Lupa M."/>
            <person name="Whitman W.B."/>
            <person name="Richardson P."/>
        </authorList>
    </citation>
    <scope>NUCLEOTIDE SEQUENCE [LARGE SCALE GENOMIC DNA]</scope>
    <source>
        <strain>C6 / ATCC BAA-1332</strain>
    </source>
</reference>
<feature type="chain" id="PRO_1000142422" description="Large ribosomal subunit protein uL5">
    <location>
        <begin position="1"/>
        <end position="181"/>
    </location>
</feature>
<keyword id="KW-0687">Ribonucleoprotein</keyword>
<keyword id="KW-0689">Ribosomal protein</keyword>
<keyword id="KW-0694">RNA-binding</keyword>
<keyword id="KW-0699">rRNA-binding</keyword>
<keyword id="KW-0820">tRNA-binding</keyword>
<comment type="function">
    <text evidence="1">This is one of the proteins that bind and probably mediate the attachment of the 5S RNA into the large ribosomal subunit, where it forms part of the central protuberance. In the 70S ribosome it contacts protein S13 of the 30S subunit (bridge B1b), connecting the 2 subunits; this bridge is implicated in subunit movement. May contact the P site tRNA; the 5S rRNA and some of its associated proteins might help stabilize positioning of ribosome-bound tRNAs.</text>
</comment>
<comment type="subunit">
    <text evidence="1">Part of the 50S ribosomal subunit; contacts the 5S rRNA and probably tRNA. Forms a bridge to the 30S subunit in the 70S ribosome.</text>
</comment>
<comment type="similarity">
    <text evidence="1">Belongs to the universal ribosomal protein uL5 family.</text>
</comment>